<comment type="function">
    <text>Central component of the spindle assembly checkpoint. Thought to recruit MAD2 to unattached kinetochores. During checkpoint activity, MAD2 is relayed from the MAD1-MAD2 complex to the mitotic checkpoint complex (MCC). The formation of a MAD1-BUB1-BUB3 complex seems to be required for the spindle checkpoint mechanism.</text>
</comment>
<comment type="subunit">
    <text evidence="3">Forms a stable heteromer with MAD2 throughout the cell cycle. Part of complex consisting of MAD1, BUB1 and BUB3 after activation of spindle checkpoint.</text>
</comment>
<comment type="interaction">
    <interactant intactId="EBI-10354">
        <id>P40957</id>
    </interactant>
    <interactant intactId="EBI-3816">
        <id>P41695</id>
        <label>BUB1</label>
    </interactant>
    <organismsDiffer>false</organismsDiffer>
    <experiments>5</experiments>
</comment>
<comment type="interaction">
    <interactant intactId="EBI-10354">
        <id>P40957</id>
    </interactant>
    <interactant intactId="EBI-3830">
        <id>P26449</id>
        <label>BUB3</label>
    </interactant>
    <organismsDiffer>false</organismsDiffer>
    <experiments>4</experiments>
</comment>
<comment type="interaction">
    <interactant intactId="EBI-10354">
        <id>P40957</id>
    </interactant>
    <interactant intactId="EBI-10362">
        <id>P40958</id>
        <label>MAD2</label>
    </interactant>
    <organismsDiffer>false</organismsDiffer>
    <experiments>7</experiments>
</comment>
<comment type="subcellular location">
    <subcellularLocation>
        <location>Nucleus</location>
    </subcellularLocation>
</comment>
<comment type="PTM">
    <text evidence="5">Becomes hyperphosphorylated when wild-type cells are arrested in mitosis. Phosphorylated by MPS1.</text>
</comment>
<comment type="miscellaneous">
    <text evidence="4">Present with 656 molecules/cell in log phase SD medium.</text>
</comment>
<comment type="similarity">
    <text evidence="6">Belongs to the MAD1 family.</text>
</comment>
<proteinExistence type="evidence at protein level"/>
<keyword id="KW-0131">Cell cycle</keyword>
<keyword id="KW-0132">Cell division</keyword>
<keyword id="KW-0175">Coiled coil</keyword>
<keyword id="KW-0498">Mitosis</keyword>
<keyword id="KW-0539">Nucleus</keyword>
<keyword id="KW-0597">Phosphoprotein</keyword>
<keyword id="KW-1185">Reference proteome</keyword>
<evidence type="ECO:0000255" key="1"/>
<evidence type="ECO:0000256" key="2">
    <source>
        <dbReference type="SAM" id="MobiDB-lite"/>
    </source>
</evidence>
<evidence type="ECO:0000269" key="3">
    <source>
    </source>
</evidence>
<evidence type="ECO:0000269" key="4">
    <source>
    </source>
</evidence>
<evidence type="ECO:0000269" key="5">
    <source>
    </source>
</evidence>
<evidence type="ECO:0000305" key="6"/>
<evidence type="ECO:0007744" key="7">
    <source>
    </source>
</evidence>
<organism>
    <name type="scientific">Saccharomyces cerevisiae (strain ATCC 204508 / S288c)</name>
    <name type="common">Baker's yeast</name>
    <dbReference type="NCBI Taxonomy" id="559292"/>
    <lineage>
        <taxon>Eukaryota</taxon>
        <taxon>Fungi</taxon>
        <taxon>Dikarya</taxon>
        <taxon>Ascomycota</taxon>
        <taxon>Saccharomycotina</taxon>
        <taxon>Saccharomycetes</taxon>
        <taxon>Saccharomycetales</taxon>
        <taxon>Saccharomycetaceae</taxon>
        <taxon>Saccharomyces</taxon>
    </lineage>
</organism>
<reference key="1">
    <citation type="journal article" date="1995" name="J. Cell Biol.">
        <title>Mad1p, a phosphoprotein component of the spindle assembly checkpoint in budding yeast.</title>
        <authorList>
            <person name="Hardwick K.G."/>
            <person name="Murray A.W."/>
        </authorList>
    </citation>
    <scope>NUCLEOTIDE SEQUENCE [GENOMIC DNA]</scope>
    <source>
        <strain>ATCC 200060 / W303</strain>
    </source>
</reference>
<reference key="2">
    <citation type="journal article" date="1997" name="Yeast">
        <title>Sequence analysis of 203 kilobases from Saccharomyces cerevisiae chromosome VII.</title>
        <authorList>
            <person name="Rieger M."/>
            <person name="Brueckner M."/>
            <person name="Schaefer M."/>
            <person name="Mueller-Auer S."/>
        </authorList>
    </citation>
    <scope>NUCLEOTIDE SEQUENCE [GENOMIC DNA]</scope>
    <source>
        <strain>ATCC 204508 / S288c</strain>
    </source>
</reference>
<reference key="3">
    <citation type="journal article" date="1997" name="Nature">
        <title>The nucleotide sequence of Saccharomyces cerevisiae chromosome VII.</title>
        <authorList>
            <person name="Tettelin H."/>
            <person name="Agostoni-Carbone M.L."/>
            <person name="Albermann K."/>
            <person name="Albers M."/>
            <person name="Arroyo J."/>
            <person name="Backes U."/>
            <person name="Barreiros T."/>
            <person name="Bertani I."/>
            <person name="Bjourson A.J."/>
            <person name="Brueckner M."/>
            <person name="Bruschi C.V."/>
            <person name="Carignani G."/>
            <person name="Castagnoli L."/>
            <person name="Cerdan E."/>
            <person name="Clemente M.L."/>
            <person name="Coblenz A."/>
            <person name="Coglievina M."/>
            <person name="Coissac E."/>
            <person name="Defoor E."/>
            <person name="Del Bino S."/>
            <person name="Delius H."/>
            <person name="Delneri D."/>
            <person name="de Wergifosse P."/>
            <person name="Dujon B."/>
            <person name="Durand P."/>
            <person name="Entian K.-D."/>
            <person name="Eraso P."/>
            <person name="Escribano V."/>
            <person name="Fabiani L."/>
            <person name="Fartmann B."/>
            <person name="Feroli F."/>
            <person name="Feuermann M."/>
            <person name="Frontali L."/>
            <person name="Garcia-Gonzalez M."/>
            <person name="Garcia-Saez M.I."/>
            <person name="Goffeau A."/>
            <person name="Guerreiro P."/>
            <person name="Hani J."/>
            <person name="Hansen M."/>
            <person name="Hebling U."/>
            <person name="Hernandez K."/>
            <person name="Heumann K."/>
            <person name="Hilger F."/>
            <person name="Hofmann B."/>
            <person name="Indge K.J."/>
            <person name="James C.M."/>
            <person name="Klima R."/>
            <person name="Koetter P."/>
            <person name="Kramer B."/>
            <person name="Kramer W."/>
            <person name="Lauquin G."/>
            <person name="Leuther H."/>
            <person name="Louis E.J."/>
            <person name="Maillier E."/>
            <person name="Marconi A."/>
            <person name="Martegani E."/>
            <person name="Mazon M.J."/>
            <person name="Mazzoni C."/>
            <person name="McReynolds A.D.K."/>
            <person name="Melchioretto P."/>
            <person name="Mewes H.-W."/>
            <person name="Minenkova O."/>
            <person name="Mueller-Auer S."/>
            <person name="Nawrocki A."/>
            <person name="Netter P."/>
            <person name="Neu R."/>
            <person name="Nombela C."/>
            <person name="Oliver S.G."/>
            <person name="Panzeri L."/>
            <person name="Paoluzi S."/>
            <person name="Plevani P."/>
            <person name="Portetelle D."/>
            <person name="Portillo F."/>
            <person name="Potier S."/>
            <person name="Purnelle B."/>
            <person name="Rieger M."/>
            <person name="Riles L."/>
            <person name="Rinaldi T."/>
            <person name="Robben J."/>
            <person name="Rodrigues-Pousada C."/>
            <person name="Rodriguez-Belmonte E."/>
            <person name="Rodriguez-Torres A.M."/>
            <person name="Rose M."/>
            <person name="Ruzzi M."/>
            <person name="Saliola M."/>
            <person name="Sanchez-Perez M."/>
            <person name="Schaefer B."/>
            <person name="Schaefer M."/>
            <person name="Scharfe M."/>
            <person name="Schmidheini T."/>
            <person name="Schreer A."/>
            <person name="Skala J."/>
            <person name="Souciet J.-L."/>
            <person name="Steensma H.Y."/>
            <person name="Talla E."/>
            <person name="Thierry A."/>
            <person name="Vandenbol M."/>
            <person name="van der Aart Q.J.M."/>
            <person name="Van Dyck L."/>
            <person name="Vanoni M."/>
            <person name="Verhasselt P."/>
            <person name="Voet M."/>
            <person name="Volckaert G."/>
            <person name="Wambutt R."/>
            <person name="Watson M.D."/>
            <person name="Weber N."/>
            <person name="Wedler E."/>
            <person name="Wedler H."/>
            <person name="Wipfli P."/>
            <person name="Wolf K."/>
            <person name="Wright L.F."/>
            <person name="Zaccaria P."/>
            <person name="Zimmermann M."/>
            <person name="Zollner A."/>
            <person name="Kleine K."/>
        </authorList>
    </citation>
    <scope>NUCLEOTIDE SEQUENCE [LARGE SCALE GENOMIC DNA]</scope>
    <source>
        <strain>ATCC 204508 / S288c</strain>
    </source>
</reference>
<reference key="4">
    <citation type="journal article" date="2014" name="G3 (Bethesda)">
        <title>The reference genome sequence of Saccharomyces cerevisiae: Then and now.</title>
        <authorList>
            <person name="Engel S.R."/>
            <person name="Dietrich F.S."/>
            <person name="Fisk D.G."/>
            <person name="Binkley G."/>
            <person name="Balakrishnan R."/>
            <person name="Costanzo M.C."/>
            <person name="Dwight S.S."/>
            <person name="Hitz B.C."/>
            <person name="Karra K."/>
            <person name="Nash R.S."/>
            <person name="Weng S."/>
            <person name="Wong E.D."/>
            <person name="Lloyd P."/>
            <person name="Skrzypek M.S."/>
            <person name="Miyasato S.R."/>
            <person name="Simison M."/>
            <person name="Cherry J.M."/>
        </authorList>
    </citation>
    <scope>GENOME REANNOTATION</scope>
    <source>
        <strain>ATCC 204508 / S288c</strain>
    </source>
</reference>
<reference key="5">
    <citation type="journal article" date="1996" name="Science">
        <title>Activation of the budding yeast spindle assembly checkpoint without mitotic spindle disruption.</title>
        <authorList>
            <person name="Hardwick K.G."/>
            <person name="Weiss E."/>
            <person name="Luca F.C."/>
            <person name="Winey M."/>
            <person name="Murray A.W."/>
        </authorList>
    </citation>
    <scope>PHOSPHORYLATION BY MPS1</scope>
</reference>
<reference key="6">
    <citation type="journal article" date="1999" name="Mol. Biol. Cell">
        <title>The spindle checkpoint of budding yeast depends on a tight complex between the Mad1 and Mad2 proteins.</title>
        <authorList>
            <person name="Chen R.H."/>
            <person name="Brady D.M."/>
            <person name="Smith D."/>
            <person name="Murray A.W."/>
            <person name="Hardwick K.G."/>
        </authorList>
    </citation>
    <scope>INTERACTION WITH MAD2</scope>
</reference>
<reference key="7">
    <citation type="journal article" date="2000" name="Curr. Biol.">
        <title>Complex formation between Mad1p, Bub1p and Bub3p is crucial for spindle checkpoint function.</title>
        <authorList>
            <person name="Brady D.M."/>
            <person name="Hardwick K.G."/>
        </authorList>
    </citation>
    <scope>IDENTIFICATION IN A COMPLEX WITH BUB1 AND BUB3</scope>
    <scope>MUTAGENESIS OF 653-ARG--LYS-655</scope>
</reference>
<reference key="8">
    <citation type="journal article" date="2001" name="EMBO J.">
        <title>Bub3 interaction with Mad2, Mad3 and Cdc20 is mediated by WD40 repeats and does not require intact kinetochores.</title>
        <authorList>
            <person name="Fraschini R."/>
            <person name="Beretta A."/>
            <person name="Sironi L."/>
            <person name="Musacchio A."/>
            <person name="Lucchini G."/>
            <person name="Piatti S."/>
        </authorList>
    </citation>
    <scope>INTERACTION WITH BUB3</scope>
</reference>
<reference key="9">
    <citation type="journal article" date="2003" name="Nature">
        <title>Global analysis of protein expression in yeast.</title>
        <authorList>
            <person name="Ghaemmaghami S."/>
            <person name="Huh W.-K."/>
            <person name="Bower K."/>
            <person name="Howson R.W."/>
            <person name="Belle A."/>
            <person name="Dephoure N."/>
            <person name="O'Shea E.K."/>
            <person name="Weissman J.S."/>
        </authorList>
    </citation>
    <scope>LEVEL OF PROTEIN EXPRESSION [LARGE SCALE ANALYSIS]</scope>
</reference>
<reference key="10">
    <citation type="journal article" date="2008" name="Mol. Cell. Proteomics">
        <title>A multidimensional chromatography technology for in-depth phosphoproteome analysis.</title>
        <authorList>
            <person name="Albuquerque C.P."/>
            <person name="Smolka M.B."/>
            <person name="Payne S.H."/>
            <person name="Bafna V."/>
            <person name="Eng J."/>
            <person name="Zhou H."/>
        </authorList>
    </citation>
    <scope>PHOSPHORYLATION [LARGE SCALE ANALYSIS] AT THR-502</scope>
    <scope>IDENTIFICATION BY MASS SPECTROMETRY [LARGE SCALE ANALYSIS]</scope>
</reference>
<reference key="11">
    <citation type="journal article" date="2009" name="Science">
        <title>Global analysis of Cdk1 substrate phosphorylation sites provides insights into evolution.</title>
        <authorList>
            <person name="Holt L.J."/>
            <person name="Tuch B.B."/>
            <person name="Villen J."/>
            <person name="Johnson A.D."/>
            <person name="Gygi S.P."/>
            <person name="Morgan D.O."/>
        </authorList>
    </citation>
    <scope>IDENTIFICATION BY MASS SPECTROMETRY [LARGE SCALE ANALYSIS]</scope>
</reference>
<accession>P40957</accession>
<accession>D6VU58</accession>
<protein>
    <recommendedName>
        <fullName>Spindle assembly checkpoint component MAD1</fullName>
    </recommendedName>
    <alternativeName>
        <fullName>Mitotic arrest deficient protein 1</fullName>
    </alternativeName>
</protein>
<feature type="chain" id="PRO_0000213798" description="Spindle assembly checkpoint component MAD1">
    <location>
        <begin position="1"/>
        <end position="749"/>
    </location>
</feature>
<feature type="region of interest" description="Disordered" evidence="2">
    <location>
        <begin position="39"/>
        <end position="59"/>
    </location>
</feature>
<feature type="region of interest" description="Disordered" evidence="2">
    <location>
        <begin position="323"/>
        <end position="370"/>
    </location>
</feature>
<feature type="coiled-coil region" evidence="1">
    <location>
        <begin position="57"/>
        <end position="324"/>
    </location>
</feature>
<feature type="coiled-coil region" evidence="1">
    <location>
        <begin position="390"/>
        <end position="656"/>
    </location>
</feature>
<feature type="compositionally biased region" description="Low complexity" evidence="2">
    <location>
        <begin position="331"/>
        <end position="370"/>
    </location>
</feature>
<feature type="modified residue" description="Phosphothreonine" evidence="7">
    <location>
        <position position="502"/>
    </location>
</feature>
<feature type="mutagenesis site" description="Abolishes interaction with BUB1 and BUB3 and spindle checkpoint function." evidence="3">
    <original>RLK</original>
    <variation>AAA</variation>
    <location>
        <begin position="653"/>
        <end position="655"/>
    </location>
</feature>
<gene>
    <name type="primary">MAD1</name>
    <name type="ordered locus">YGL086W</name>
</gene>
<dbReference type="EMBL" id="U14632">
    <property type="protein sequence ID" value="AAA91620.1"/>
    <property type="molecule type" value="Genomic_DNA"/>
</dbReference>
<dbReference type="EMBL" id="Z72608">
    <property type="protein sequence ID" value="CAA96791.1"/>
    <property type="molecule type" value="Genomic_DNA"/>
</dbReference>
<dbReference type="EMBL" id="BK006941">
    <property type="protein sequence ID" value="DAA08019.1"/>
    <property type="molecule type" value="Genomic_DNA"/>
</dbReference>
<dbReference type="PIR" id="A57276">
    <property type="entry name" value="A57276"/>
</dbReference>
<dbReference type="RefSeq" id="NP_011429.3">
    <property type="nucleotide sequence ID" value="NM_001180951.3"/>
</dbReference>
<dbReference type="SMR" id="P40957"/>
<dbReference type="BioGRID" id="33164">
    <property type="interactions" value="455"/>
</dbReference>
<dbReference type="ComplexPortal" id="CPX-3212">
    <property type="entry name" value="Mitotic checkpoint complex, MAD1-MAD2-BUB1-BUB3 subcomplex"/>
</dbReference>
<dbReference type="ComplexPortal" id="CPX-961">
    <property type="entry name" value="Mitotic spindle assembly checkpoint, MAD1-MAD2 complex"/>
</dbReference>
<dbReference type="DIP" id="DIP-293N"/>
<dbReference type="ELM" id="P40957"/>
<dbReference type="FunCoup" id="P40957">
    <property type="interactions" value="435"/>
</dbReference>
<dbReference type="IntAct" id="P40957">
    <property type="interactions" value="13"/>
</dbReference>
<dbReference type="MINT" id="P40957"/>
<dbReference type="STRING" id="4932.YGL086W"/>
<dbReference type="iPTMnet" id="P40957"/>
<dbReference type="PaxDb" id="4932-YGL086W"/>
<dbReference type="PeptideAtlas" id="P40957"/>
<dbReference type="EnsemblFungi" id="YGL086W_mRNA">
    <property type="protein sequence ID" value="YGL086W"/>
    <property type="gene ID" value="YGL086W"/>
</dbReference>
<dbReference type="GeneID" id="852794"/>
<dbReference type="KEGG" id="sce:YGL086W"/>
<dbReference type="AGR" id="SGD:S000003054"/>
<dbReference type="SGD" id="S000003054">
    <property type="gene designation" value="MAD1"/>
</dbReference>
<dbReference type="VEuPathDB" id="FungiDB:YGL086W"/>
<dbReference type="eggNOG" id="KOG4593">
    <property type="taxonomic scope" value="Eukaryota"/>
</dbReference>
<dbReference type="HOGENOM" id="CLU_026595_0_0_1"/>
<dbReference type="InParanoid" id="P40957"/>
<dbReference type="OMA" id="YKLDFMP"/>
<dbReference type="OrthoDB" id="331602at2759"/>
<dbReference type="BioCyc" id="YEAST:G3O-30587-MONOMER"/>
<dbReference type="BioGRID-ORCS" id="852794">
    <property type="hits" value="0 hits in 10 CRISPR screens"/>
</dbReference>
<dbReference type="PRO" id="PR:P40957"/>
<dbReference type="Proteomes" id="UP000002311">
    <property type="component" value="Chromosome VII"/>
</dbReference>
<dbReference type="RNAct" id="P40957">
    <property type="molecule type" value="protein"/>
</dbReference>
<dbReference type="GO" id="GO:0000776">
    <property type="term" value="C:kinetochore"/>
    <property type="evidence" value="ECO:0000314"/>
    <property type="project" value="SGD"/>
</dbReference>
<dbReference type="GO" id="GO:0072686">
    <property type="term" value="C:mitotic spindle"/>
    <property type="evidence" value="ECO:0000318"/>
    <property type="project" value="GO_Central"/>
</dbReference>
<dbReference type="GO" id="GO:0005635">
    <property type="term" value="C:nuclear envelope"/>
    <property type="evidence" value="ECO:0000318"/>
    <property type="project" value="GO_Central"/>
</dbReference>
<dbReference type="GO" id="GO:0005634">
    <property type="term" value="C:nucleus"/>
    <property type="evidence" value="ECO:0000314"/>
    <property type="project" value="SGD"/>
</dbReference>
<dbReference type="GO" id="GO:0090268">
    <property type="term" value="P:activation of mitotic cell cycle spindle assembly checkpoint"/>
    <property type="evidence" value="ECO:0000315"/>
    <property type="project" value="SGD"/>
</dbReference>
<dbReference type="GO" id="GO:0051315">
    <property type="term" value="P:attachment of mitotic spindle microtubules to kinetochore"/>
    <property type="evidence" value="ECO:0000318"/>
    <property type="project" value="GO_Central"/>
</dbReference>
<dbReference type="GO" id="GO:0051301">
    <property type="term" value="P:cell division"/>
    <property type="evidence" value="ECO:0007669"/>
    <property type="project" value="UniProtKB-KW"/>
</dbReference>
<dbReference type="GO" id="GO:0044774">
    <property type="term" value="P:mitotic DNA integrity checkpoint signaling"/>
    <property type="evidence" value="ECO:0000316"/>
    <property type="project" value="SGD"/>
</dbReference>
<dbReference type="GO" id="GO:0007094">
    <property type="term" value="P:mitotic spindle assembly checkpoint signaling"/>
    <property type="evidence" value="ECO:0000314"/>
    <property type="project" value="ComplexPortal"/>
</dbReference>
<dbReference type="GO" id="GO:1901925">
    <property type="term" value="P:negative regulation of protein import into nucleus during spindle assembly checkpoint"/>
    <property type="evidence" value="ECO:0000315"/>
    <property type="project" value="SGD"/>
</dbReference>
<dbReference type="GO" id="GO:0006913">
    <property type="term" value="P:nucleocytoplasmic transport"/>
    <property type="evidence" value="ECO:0000316"/>
    <property type="project" value="SGD"/>
</dbReference>
<dbReference type="FunFam" id="3.30.457.60:FF:000008">
    <property type="entry name" value="Spindle assembly checkpoint component MAD1"/>
    <property type="match status" value="1"/>
</dbReference>
<dbReference type="Gene3D" id="3.30.457.60">
    <property type="match status" value="1"/>
</dbReference>
<dbReference type="InterPro" id="IPR008672">
    <property type="entry name" value="Mad1"/>
</dbReference>
<dbReference type="PANTHER" id="PTHR23168:SF0">
    <property type="entry name" value="MITOTIC SPINDLE ASSEMBLY CHECKPOINT PROTEIN MAD1"/>
    <property type="match status" value="1"/>
</dbReference>
<dbReference type="PANTHER" id="PTHR23168">
    <property type="entry name" value="MITOTIC SPINDLE ASSEMBLY CHECKPOINT PROTEIN MAD1 MITOTIC ARREST DEFICIENT-LIKE PROTEIN 1"/>
    <property type="match status" value="1"/>
</dbReference>
<dbReference type="Pfam" id="PF05557">
    <property type="entry name" value="MAD"/>
    <property type="match status" value="1"/>
</dbReference>
<name>MAD1_YEAST</name>
<sequence length="749" mass="87651">MDVRAALQCFFSALSGRFTGKKLGLEIYSIQYKMSNSGGSSPFLESPGGSPDVGSTNGQSNRQIQALQFKLNTLQNEYEIEKLQLQKQTNILEKKYKATIDELEKALNDTKYLYESNDKLEQELKSLKERSANSMNDKDKCIEELRTTLQNKDLEMETLRQQYDSKLSKVTNQCDHFKLEAESSHSLLMKYEKEIKRQSVDIKDLQHQVMEKDDELSSVKASKMINSHPNYSTEEFNELTEMNKMIQDQVQYTKELELANMQQANELKKLKQSQDTSTFWKLENEKLQNKLSQLHVLESQYENLQLENIDLKSKLTKWEIYNDSDDDDDNNVNNNDNNNNNKNDNNNDNNNDTSNNNNINNNNRTKNNIRNNPEEIIRDWKLTKKECLILTDMNDKLRLDNNNLKLLNDEMALERNQILDLNKNYENNIVNLKRLNHELEQQKSLSFEECRLLREQLDGLYSAQNNALLEVENSETHASNKNVNEDMNNLIDTYKNKTEDLTNELKKLNDQLLSNSNDVETQRKKRKLTSDQIGLNYSQRLNELQLENVSVSRELSKAQTTIQLLQEKLEKLTKLKEKKIRILQLRDGPFIKDQFIKKNKLLLLEKENADLLNELKKNNPAVETVPISVYDSLNFELKQFEQEVFKSNKRFSRLKQVFNNKSLEFIDVVNSLLGFKLEFQQDSRVKIFSCFKPEKYLIADLNENTLKSNLDADIEGWDDLMNLWVEDRGQLPCFLATITLRLWEQRQAK</sequence>